<keyword id="KW-0002">3D-structure</keyword>
<keyword id="KW-0021">Allosteric enzyme</keyword>
<keyword id="KW-0328">Glycosyltransferase</keyword>
<keyword id="KW-0342">GTP-binding</keyword>
<keyword id="KW-0460">Magnesium</keyword>
<keyword id="KW-0547">Nucleotide-binding</keyword>
<keyword id="KW-1185">Reference proteome</keyword>
<keyword id="KW-0808">Transferase</keyword>
<reference key="1">
    <citation type="journal article" date="2004" name="Proc. Natl. Acad. Sci. U.S.A.">
        <title>Genomic plasticity of the causative agent of melioidosis, Burkholderia pseudomallei.</title>
        <authorList>
            <person name="Holden M.T.G."/>
            <person name="Titball R.W."/>
            <person name="Peacock S.J."/>
            <person name="Cerdeno-Tarraga A.-M."/>
            <person name="Atkins T."/>
            <person name="Crossman L.C."/>
            <person name="Pitt T."/>
            <person name="Churcher C."/>
            <person name="Mungall K.L."/>
            <person name="Bentley S.D."/>
            <person name="Sebaihia M."/>
            <person name="Thomson N.R."/>
            <person name="Bason N."/>
            <person name="Beacham I.R."/>
            <person name="Brooks K."/>
            <person name="Brown K.A."/>
            <person name="Brown N.F."/>
            <person name="Challis G.L."/>
            <person name="Cherevach I."/>
            <person name="Chillingworth T."/>
            <person name="Cronin A."/>
            <person name="Crossett B."/>
            <person name="Davis P."/>
            <person name="DeShazer D."/>
            <person name="Feltwell T."/>
            <person name="Fraser A."/>
            <person name="Hance Z."/>
            <person name="Hauser H."/>
            <person name="Holroyd S."/>
            <person name="Jagels K."/>
            <person name="Keith K.E."/>
            <person name="Maddison M."/>
            <person name="Moule S."/>
            <person name="Price C."/>
            <person name="Quail M.A."/>
            <person name="Rabbinowitsch E."/>
            <person name="Rutherford K."/>
            <person name="Sanders M."/>
            <person name="Simmonds M."/>
            <person name="Songsivilai S."/>
            <person name="Stevens K."/>
            <person name="Tumapa S."/>
            <person name="Vesaratchavest M."/>
            <person name="Whitehead S."/>
            <person name="Yeats C."/>
            <person name="Barrell B.G."/>
            <person name="Oyston P.C.F."/>
            <person name="Parkhill J."/>
        </authorList>
    </citation>
    <scope>NUCLEOTIDE SEQUENCE [LARGE SCALE GENOMIC DNA]</scope>
    <source>
        <strain>K96243</strain>
    </source>
</reference>
<reference key="2">
    <citation type="submission" date="2008-07" db="PDB data bank">
        <title>2.6 A crystal structure of uracil phosphoribosyltransferase from Burkholderia pseudomallei.</title>
        <authorList>
            <consortium name="Seattle structural genomics center for infectious disease (SSGCID)"/>
        </authorList>
    </citation>
    <scope>X-RAY CRYSTALLOGRAPHY (2.6 ANGSTROMS)</scope>
</reference>
<proteinExistence type="evidence at protein level"/>
<name>UPP_BURPS</name>
<comment type="function">
    <text evidence="1">Catalyzes the conversion of uracil and 5-phospho-alpha-D-ribose 1-diphosphate (PRPP) to UMP and diphosphate.</text>
</comment>
<comment type="catalytic activity">
    <reaction evidence="1">
        <text>UMP + diphosphate = 5-phospho-alpha-D-ribose 1-diphosphate + uracil</text>
        <dbReference type="Rhea" id="RHEA:13017"/>
        <dbReference type="ChEBI" id="CHEBI:17568"/>
        <dbReference type="ChEBI" id="CHEBI:33019"/>
        <dbReference type="ChEBI" id="CHEBI:57865"/>
        <dbReference type="ChEBI" id="CHEBI:58017"/>
        <dbReference type="EC" id="2.4.2.9"/>
    </reaction>
</comment>
<comment type="cofactor">
    <cofactor evidence="1">
        <name>Mg(2+)</name>
        <dbReference type="ChEBI" id="CHEBI:18420"/>
    </cofactor>
    <text evidence="1">Binds 1 Mg(2+) ion per subunit. The magnesium is bound as Mg-PRPP.</text>
</comment>
<comment type="activity regulation">
    <text evidence="1">Allosterically activated by GTP.</text>
</comment>
<comment type="pathway">
    <text evidence="1">Pyrimidine metabolism; UMP biosynthesis via salvage pathway; UMP from uracil: step 1/1.</text>
</comment>
<comment type="similarity">
    <text evidence="1">Belongs to the UPRTase family.</text>
</comment>
<protein>
    <recommendedName>
        <fullName evidence="1">Uracil phosphoribosyltransferase</fullName>
        <ecNumber evidence="1">2.4.2.9</ecNumber>
    </recommendedName>
    <alternativeName>
        <fullName evidence="1">UMP pyrophosphorylase</fullName>
    </alternativeName>
    <alternativeName>
        <fullName evidence="1">UPRTase</fullName>
    </alternativeName>
</protein>
<evidence type="ECO:0000255" key="1">
    <source>
        <dbReference type="HAMAP-Rule" id="MF_01218"/>
    </source>
</evidence>
<evidence type="ECO:0007829" key="2">
    <source>
        <dbReference type="PDB" id="3DMP"/>
    </source>
</evidence>
<feature type="chain" id="PRO_0000120809" description="Uracil phosphoribosyltransferase">
    <location>
        <begin position="1"/>
        <end position="216"/>
    </location>
</feature>
<feature type="binding site" evidence="1">
    <location>
        <position position="85"/>
    </location>
    <ligand>
        <name>5-phospho-alpha-D-ribose 1-diphosphate</name>
        <dbReference type="ChEBI" id="CHEBI:58017"/>
    </ligand>
</feature>
<feature type="binding site" evidence="1">
    <location>
        <position position="110"/>
    </location>
    <ligand>
        <name>5-phospho-alpha-D-ribose 1-diphosphate</name>
        <dbReference type="ChEBI" id="CHEBI:58017"/>
    </ligand>
</feature>
<feature type="binding site" evidence="1">
    <location>
        <begin position="135"/>
        <end position="143"/>
    </location>
    <ligand>
        <name>5-phospho-alpha-D-ribose 1-diphosphate</name>
        <dbReference type="ChEBI" id="CHEBI:58017"/>
    </ligand>
</feature>
<feature type="binding site" evidence="1">
    <location>
        <position position="200"/>
    </location>
    <ligand>
        <name>uracil</name>
        <dbReference type="ChEBI" id="CHEBI:17568"/>
    </ligand>
</feature>
<feature type="binding site" evidence="1">
    <location>
        <begin position="205"/>
        <end position="207"/>
    </location>
    <ligand>
        <name>uracil</name>
        <dbReference type="ChEBI" id="CHEBI:17568"/>
    </ligand>
</feature>
<feature type="binding site" evidence="1">
    <location>
        <position position="206"/>
    </location>
    <ligand>
        <name>5-phospho-alpha-D-ribose 1-diphosphate</name>
        <dbReference type="ChEBI" id="CHEBI:58017"/>
    </ligand>
</feature>
<feature type="strand" evidence="2">
    <location>
        <begin position="10"/>
        <end position="13"/>
    </location>
</feature>
<feature type="helix" evidence="2">
    <location>
        <begin position="16"/>
        <end position="26"/>
    </location>
</feature>
<feature type="helix" evidence="2">
    <location>
        <begin position="32"/>
        <end position="50"/>
    </location>
</feature>
<feature type="turn" evidence="2">
    <location>
        <begin position="51"/>
        <end position="53"/>
    </location>
</feature>
<feature type="strand" evidence="2">
    <location>
        <begin position="56"/>
        <end position="62"/>
    </location>
</feature>
<feature type="strand" evidence="2">
    <location>
        <begin position="67"/>
        <end position="73"/>
    </location>
</feature>
<feature type="helix" evidence="2">
    <location>
        <begin position="75"/>
        <end position="77"/>
    </location>
</feature>
<feature type="strand" evidence="2">
    <location>
        <begin position="78"/>
        <end position="84"/>
    </location>
</feature>
<feature type="turn" evidence="2">
    <location>
        <begin position="85"/>
        <end position="87"/>
    </location>
</feature>
<feature type="helix" evidence="2">
    <location>
        <begin position="88"/>
        <end position="97"/>
    </location>
</feature>
<feature type="strand" evidence="2">
    <location>
        <begin position="101"/>
        <end position="103"/>
    </location>
</feature>
<feature type="strand" evidence="2">
    <location>
        <begin position="105"/>
        <end position="107"/>
    </location>
</feature>
<feature type="strand" evidence="2">
    <location>
        <begin position="113"/>
        <end position="115"/>
    </location>
</feature>
<feature type="strand" evidence="2">
    <location>
        <begin position="119"/>
        <end position="122"/>
    </location>
</feature>
<feature type="strand" evidence="2">
    <location>
        <begin position="130"/>
        <end position="134"/>
    </location>
</feature>
<feature type="strand" evidence="2">
    <location>
        <begin position="136"/>
        <end position="141"/>
    </location>
</feature>
<feature type="helix" evidence="2">
    <location>
        <begin position="142"/>
        <end position="152"/>
    </location>
</feature>
<feature type="turn" evidence="2">
    <location>
        <begin position="153"/>
        <end position="155"/>
    </location>
</feature>
<feature type="helix" evidence="2">
    <location>
        <begin position="158"/>
        <end position="160"/>
    </location>
</feature>
<feature type="strand" evidence="2">
    <location>
        <begin position="161"/>
        <end position="164"/>
    </location>
</feature>
<feature type="strand" evidence="2">
    <location>
        <begin position="166"/>
        <end position="168"/>
    </location>
</feature>
<feature type="helix" evidence="2">
    <location>
        <begin position="170"/>
        <end position="179"/>
    </location>
</feature>
<feature type="strand" evidence="2">
    <location>
        <begin position="184"/>
        <end position="190"/>
    </location>
</feature>
<feature type="strand" evidence="2">
    <location>
        <begin position="200"/>
        <end position="203"/>
    </location>
</feature>
<feature type="helix" evidence="2">
    <location>
        <begin position="207"/>
        <end position="212"/>
    </location>
</feature>
<sequence length="216" mass="24075">MKQDSRFPNLFILDHPLIQHKLTHMRDKDTSTRTFRELLREITLLMGYEITRNLPITTKRVETPLVEIDAPVIAGKKLAIVPVLRAGVGMSDGLLELIPSARVGHIGVYRADDHRPVEYLVRLPDLEDRIFILCDPMVATGYSAAHAIDVLKRRGVPGERLMFLALVAAPEGVQVFQDAHPDVKLYVASLDSHLDDHAYIVPGLGDAGDRLFGTKN</sequence>
<accession>Q63VS8</accession>
<organism>
    <name type="scientific">Burkholderia pseudomallei (strain K96243)</name>
    <dbReference type="NCBI Taxonomy" id="272560"/>
    <lineage>
        <taxon>Bacteria</taxon>
        <taxon>Pseudomonadati</taxon>
        <taxon>Pseudomonadota</taxon>
        <taxon>Betaproteobacteria</taxon>
        <taxon>Burkholderiales</taxon>
        <taxon>Burkholderiaceae</taxon>
        <taxon>Burkholderia</taxon>
        <taxon>pseudomallei group</taxon>
    </lineage>
</organism>
<dbReference type="EC" id="2.4.2.9" evidence="1"/>
<dbReference type="EMBL" id="BX571965">
    <property type="protein sequence ID" value="CAH35161.1"/>
    <property type="molecule type" value="Genomic_DNA"/>
</dbReference>
<dbReference type="RefSeq" id="WP_004186446.1">
    <property type="nucleotide sequence ID" value="NZ_CP009538.1"/>
</dbReference>
<dbReference type="RefSeq" id="YP_107788.1">
    <property type="nucleotide sequence ID" value="NC_006350.1"/>
</dbReference>
<dbReference type="PDB" id="3DMP">
    <property type="method" value="X-ray"/>
    <property type="resolution" value="2.60 A"/>
    <property type="chains" value="A/B/C/D=1-216"/>
</dbReference>
<dbReference type="PDBsum" id="3DMP"/>
<dbReference type="SMR" id="Q63VS8"/>
<dbReference type="STRING" id="272560.BPSL1166"/>
<dbReference type="GeneID" id="93059646"/>
<dbReference type="KEGG" id="bps:BPSL1166"/>
<dbReference type="PATRIC" id="fig|272560.51.peg.371"/>
<dbReference type="eggNOG" id="COG0035">
    <property type="taxonomic scope" value="Bacteria"/>
</dbReference>
<dbReference type="UniPathway" id="UPA00574">
    <property type="reaction ID" value="UER00636"/>
</dbReference>
<dbReference type="EvolutionaryTrace" id="Q63VS8"/>
<dbReference type="Proteomes" id="UP000000605">
    <property type="component" value="Chromosome 1"/>
</dbReference>
<dbReference type="GO" id="GO:0005525">
    <property type="term" value="F:GTP binding"/>
    <property type="evidence" value="ECO:0007669"/>
    <property type="project" value="UniProtKB-KW"/>
</dbReference>
<dbReference type="GO" id="GO:0000287">
    <property type="term" value="F:magnesium ion binding"/>
    <property type="evidence" value="ECO:0007669"/>
    <property type="project" value="UniProtKB-UniRule"/>
</dbReference>
<dbReference type="GO" id="GO:0004845">
    <property type="term" value="F:uracil phosphoribosyltransferase activity"/>
    <property type="evidence" value="ECO:0007669"/>
    <property type="project" value="UniProtKB-UniRule"/>
</dbReference>
<dbReference type="GO" id="GO:0044206">
    <property type="term" value="P:UMP salvage"/>
    <property type="evidence" value="ECO:0007669"/>
    <property type="project" value="UniProtKB-UniRule"/>
</dbReference>
<dbReference type="GO" id="GO:0006223">
    <property type="term" value="P:uracil salvage"/>
    <property type="evidence" value="ECO:0007669"/>
    <property type="project" value="InterPro"/>
</dbReference>
<dbReference type="CDD" id="cd06223">
    <property type="entry name" value="PRTases_typeI"/>
    <property type="match status" value="1"/>
</dbReference>
<dbReference type="FunFam" id="3.40.50.2020:FF:000003">
    <property type="entry name" value="Uracil phosphoribosyltransferase"/>
    <property type="match status" value="1"/>
</dbReference>
<dbReference type="Gene3D" id="3.40.50.2020">
    <property type="match status" value="1"/>
</dbReference>
<dbReference type="HAMAP" id="MF_01218_B">
    <property type="entry name" value="Upp_B"/>
    <property type="match status" value="1"/>
</dbReference>
<dbReference type="InterPro" id="IPR000836">
    <property type="entry name" value="PRibTrfase_dom"/>
</dbReference>
<dbReference type="InterPro" id="IPR029057">
    <property type="entry name" value="PRTase-like"/>
</dbReference>
<dbReference type="InterPro" id="IPR034332">
    <property type="entry name" value="Upp_B"/>
</dbReference>
<dbReference type="InterPro" id="IPR050054">
    <property type="entry name" value="UPRTase/APRTase"/>
</dbReference>
<dbReference type="InterPro" id="IPR005765">
    <property type="entry name" value="Ura_phspho_trans"/>
</dbReference>
<dbReference type="NCBIfam" id="NF001097">
    <property type="entry name" value="PRK00129.1"/>
    <property type="match status" value="1"/>
</dbReference>
<dbReference type="NCBIfam" id="TIGR01091">
    <property type="entry name" value="upp"/>
    <property type="match status" value="1"/>
</dbReference>
<dbReference type="PANTHER" id="PTHR32315">
    <property type="entry name" value="ADENINE PHOSPHORIBOSYLTRANSFERASE"/>
    <property type="match status" value="1"/>
</dbReference>
<dbReference type="PANTHER" id="PTHR32315:SF4">
    <property type="entry name" value="URACIL PHOSPHORIBOSYLTRANSFERASE, CHLOROPLASTIC"/>
    <property type="match status" value="1"/>
</dbReference>
<dbReference type="Pfam" id="PF14681">
    <property type="entry name" value="UPRTase"/>
    <property type="match status" value="1"/>
</dbReference>
<dbReference type="SUPFAM" id="SSF53271">
    <property type="entry name" value="PRTase-like"/>
    <property type="match status" value="1"/>
</dbReference>
<gene>
    <name evidence="1" type="primary">upp</name>
    <name type="ordered locus">BPSL1166</name>
</gene>